<name>ISPDF_SOLM1</name>
<protein>
    <recommendedName>
        <fullName evidence="1">Bifunctional enzyme IspD/IspF</fullName>
    </recommendedName>
    <domain>
        <recommendedName>
            <fullName evidence="1">2-C-methyl-D-erythritol 4-phosphate cytidylyltransferase</fullName>
            <ecNumber evidence="1">2.7.7.60</ecNumber>
        </recommendedName>
        <alternativeName>
            <fullName evidence="1">4-diphosphocytidyl-2C-methyl-D-erythritol synthase</fullName>
        </alternativeName>
        <alternativeName>
            <fullName evidence="1">MEP cytidylyltransferase</fullName>
            <shortName evidence="1">MCT</shortName>
        </alternativeName>
    </domain>
    <domain>
        <recommendedName>
            <fullName evidence="1">2-C-methyl-D-erythritol 2,4-cyclodiphosphate synthase</fullName>
            <shortName evidence="1">MECDP-synthase</shortName>
            <shortName evidence="1">MECPP-synthase</shortName>
            <shortName evidence="1">MECPS</shortName>
            <ecNumber evidence="1">4.6.1.12</ecNumber>
        </recommendedName>
    </domain>
</protein>
<feature type="chain" id="PRO_1000215367" description="Bifunctional enzyme IspD/IspF">
    <location>
        <begin position="1"/>
        <end position="400"/>
    </location>
</feature>
<feature type="region of interest" description="2-C-methyl-D-erythritol 4-phosphate cytidylyltransferase" evidence="1">
    <location>
        <begin position="1"/>
        <end position="235"/>
    </location>
</feature>
<feature type="region of interest" description="2-C-methyl-D-erythritol 2,4-cyclodiphosphate synthase" evidence="1">
    <location>
        <begin position="236"/>
        <end position="400"/>
    </location>
</feature>
<feature type="binding site" evidence="1">
    <location>
        <begin position="242"/>
        <end position="244"/>
    </location>
    <ligand>
        <name>4-CDP-2-C-methyl-D-erythritol 2-phosphate</name>
        <dbReference type="ChEBI" id="CHEBI:57919"/>
    </ligand>
</feature>
<feature type="binding site" evidence="1">
    <location>
        <position position="242"/>
    </location>
    <ligand>
        <name>a divalent metal cation</name>
        <dbReference type="ChEBI" id="CHEBI:60240"/>
    </ligand>
</feature>
<feature type="binding site" evidence="1">
    <location>
        <position position="244"/>
    </location>
    <ligand>
        <name>a divalent metal cation</name>
        <dbReference type="ChEBI" id="CHEBI:60240"/>
    </ligand>
</feature>
<feature type="binding site" evidence="1">
    <location>
        <begin position="276"/>
        <end position="277"/>
    </location>
    <ligand>
        <name>4-CDP-2-C-methyl-D-erythritol 2-phosphate</name>
        <dbReference type="ChEBI" id="CHEBI:57919"/>
    </ligand>
</feature>
<feature type="binding site" evidence="1">
    <location>
        <position position="284"/>
    </location>
    <ligand>
        <name>a divalent metal cation</name>
        <dbReference type="ChEBI" id="CHEBI:60240"/>
    </ligand>
</feature>
<feature type="binding site" evidence="1">
    <location>
        <begin position="298"/>
        <end position="300"/>
    </location>
    <ligand>
        <name>4-CDP-2-C-methyl-D-erythritol 2-phosphate</name>
        <dbReference type="ChEBI" id="CHEBI:57919"/>
    </ligand>
</feature>
<feature type="binding site" evidence="1">
    <location>
        <begin position="303"/>
        <end position="307"/>
    </location>
    <ligand>
        <name>4-CDP-2-C-methyl-D-erythritol 2-phosphate</name>
        <dbReference type="ChEBI" id="CHEBI:57919"/>
    </ligand>
</feature>
<feature type="binding site" evidence="1">
    <location>
        <begin position="374"/>
        <end position="377"/>
    </location>
    <ligand>
        <name>4-CDP-2-C-methyl-D-erythritol 2-phosphate</name>
        <dbReference type="ChEBI" id="CHEBI:57919"/>
    </ligand>
</feature>
<feature type="binding site" evidence="1">
    <location>
        <position position="381"/>
    </location>
    <ligand>
        <name>4-CDP-2-C-methyl-D-erythritol 2-phosphate</name>
        <dbReference type="ChEBI" id="CHEBI:57919"/>
    </ligand>
</feature>
<feature type="site" description="Transition state stabilizer" evidence="1">
    <location>
        <position position="15"/>
    </location>
</feature>
<feature type="site" description="Transition state stabilizer" evidence="1">
    <location>
        <position position="25"/>
    </location>
</feature>
<feature type="site" description="Positions MEP for the nucleophilic attack" evidence="1">
    <location>
        <position position="161"/>
    </location>
</feature>
<feature type="site" description="Positions MEP for the nucleophilic attack" evidence="1">
    <location>
        <position position="216"/>
    </location>
</feature>
<feature type="site" description="Transition state stabilizer" evidence="1">
    <location>
        <position position="276"/>
    </location>
</feature>
<feature type="site" description="Transition state stabilizer" evidence="1">
    <location>
        <position position="375"/>
    </location>
</feature>
<comment type="function">
    <text evidence="1">Bifunctional enzyme that catalyzes the formation of 4-diphosphocytidyl-2-C-methyl-D-erythritol from CTP and 2-C-methyl-D-erythritol 4-phosphate (MEP) (IspD), and catalyzes the conversion of 4-diphosphocytidyl-2-C-methyl-D-erythritol 2-phosphate (CDP-ME2P) to 2-C-methyl-D-erythritol 2,4-cyclodiphosphate (ME-CPP) with a corresponding release of cytidine 5-monophosphate (CMP) (IspF).</text>
</comment>
<comment type="catalytic activity">
    <reaction evidence="1">
        <text>2-C-methyl-D-erythritol 4-phosphate + CTP + H(+) = 4-CDP-2-C-methyl-D-erythritol + diphosphate</text>
        <dbReference type="Rhea" id="RHEA:13429"/>
        <dbReference type="ChEBI" id="CHEBI:15378"/>
        <dbReference type="ChEBI" id="CHEBI:33019"/>
        <dbReference type="ChEBI" id="CHEBI:37563"/>
        <dbReference type="ChEBI" id="CHEBI:57823"/>
        <dbReference type="ChEBI" id="CHEBI:58262"/>
        <dbReference type="EC" id="2.7.7.60"/>
    </reaction>
</comment>
<comment type="catalytic activity">
    <reaction evidence="1">
        <text>4-CDP-2-C-methyl-D-erythritol 2-phosphate = 2-C-methyl-D-erythritol 2,4-cyclic diphosphate + CMP</text>
        <dbReference type="Rhea" id="RHEA:23864"/>
        <dbReference type="ChEBI" id="CHEBI:57919"/>
        <dbReference type="ChEBI" id="CHEBI:58483"/>
        <dbReference type="ChEBI" id="CHEBI:60377"/>
        <dbReference type="EC" id="4.6.1.12"/>
    </reaction>
</comment>
<comment type="cofactor">
    <cofactor evidence="1">
        <name>a divalent metal cation</name>
        <dbReference type="ChEBI" id="CHEBI:60240"/>
    </cofactor>
</comment>
<comment type="pathway">
    <text evidence="1">Isoprenoid biosynthesis; isopentenyl diphosphate biosynthesis via DXP pathway; isopentenyl diphosphate from 1-deoxy-D-xylulose 5-phosphate: step 2/6.</text>
</comment>
<comment type="pathway">
    <text evidence="1">Isoprenoid biosynthesis; isopentenyl diphosphate biosynthesis via DXP pathway; isopentenyl diphosphate from 1-deoxy-D-xylulose 5-phosphate: step 4/6.</text>
</comment>
<comment type="similarity">
    <text evidence="1">In the N-terminal section; belongs to the IspD/TarI cytidylyltransferase family. IspD subfamily.</text>
</comment>
<comment type="similarity">
    <text evidence="1">In the C-terminal section; belongs to the IspF family.</text>
</comment>
<dbReference type="EC" id="2.7.7.60" evidence="1"/>
<dbReference type="EC" id="4.6.1.12" evidence="1"/>
<dbReference type="EMBL" id="AP010904">
    <property type="protein sequence ID" value="BAH75806.1"/>
    <property type="molecule type" value="Genomic_DNA"/>
</dbReference>
<dbReference type="RefSeq" id="WP_015860988.1">
    <property type="nucleotide sequence ID" value="NC_012796.1"/>
</dbReference>
<dbReference type="SMR" id="C4XSW4"/>
<dbReference type="STRING" id="573370.DMR_23150"/>
<dbReference type="KEGG" id="dma:DMR_23150"/>
<dbReference type="eggNOG" id="COG0245">
    <property type="taxonomic scope" value="Bacteria"/>
</dbReference>
<dbReference type="eggNOG" id="COG1211">
    <property type="taxonomic scope" value="Bacteria"/>
</dbReference>
<dbReference type="HOGENOM" id="CLU_042800_2_4_7"/>
<dbReference type="OrthoDB" id="9804336at2"/>
<dbReference type="UniPathway" id="UPA00056">
    <property type="reaction ID" value="UER00093"/>
</dbReference>
<dbReference type="UniPathway" id="UPA00056">
    <property type="reaction ID" value="UER00095"/>
</dbReference>
<dbReference type="Proteomes" id="UP000009071">
    <property type="component" value="Chromosome"/>
</dbReference>
<dbReference type="GO" id="GO:0008685">
    <property type="term" value="F:2-C-methyl-D-erythritol 2,4-cyclodiphosphate synthase activity"/>
    <property type="evidence" value="ECO:0007669"/>
    <property type="project" value="UniProtKB-UniRule"/>
</dbReference>
<dbReference type="GO" id="GO:0050518">
    <property type="term" value="F:2-C-methyl-D-erythritol 4-phosphate cytidylyltransferase activity"/>
    <property type="evidence" value="ECO:0007669"/>
    <property type="project" value="UniProtKB-UniRule"/>
</dbReference>
<dbReference type="GO" id="GO:0046872">
    <property type="term" value="F:metal ion binding"/>
    <property type="evidence" value="ECO:0007669"/>
    <property type="project" value="UniProtKB-KW"/>
</dbReference>
<dbReference type="GO" id="GO:0019288">
    <property type="term" value="P:isopentenyl diphosphate biosynthetic process, methylerythritol 4-phosphate pathway"/>
    <property type="evidence" value="ECO:0007669"/>
    <property type="project" value="UniProtKB-UniRule"/>
</dbReference>
<dbReference type="GO" id="GO:0016114">
    <property type="term" value="P:terpenoid biosynthetic process"/>
    <property type="evidence" value="ECO:0007669"/>
    <property type="project" value="InterPro"/>
</dbReference>
<dbReference type="CDD" id="cd02516">
    <property type="entry name" value="CDP-ME_synthetase"/>
    <property type="match status" value="1"/>
</dbReference>
<dbReference type="CDD" id="cd00554">
    <property type="entry name" value="MECDP_synthase"/>
    <property type="match status" value="1"/>
</dbReference>
<dbReference type="FunFam" id="3.90.550.10:FF:000003">
    <property type="entry name" value="2-C-methyl-D-erythritol 4-phosphate cytidylyltransferase"/>
    <property type="match status" value="1"/>
</dbReference>
<dbReference type="Gene3D" id="3.30.1330.50">
    <property type="entry name" value="2-C-methyl-D-erythritol 2,4-cyclodiphosphate synthase"/>
    <property type="match status" value="1"/>
</dbReference>
<dbReference type="Gene3D" id="3.90.550.10">
    <property type="entry name" value="Spore Coat Polysaccharide Biosynthesis Protein SpsA, Chain A"/>
    <property type="match status" value="1"/>
</dbReference>
<dbReference type="HAMAP" id="MF_00108">
    <property type="entry name" value="IspD"/>
    <property type="match status" value="1"/>
</dbReference>
<dbReference type="HAMAP" id="MF_01520">
    <property type="entry name" value="IspDF"/>
    <property type="match status" value="1"/>
</dbReference>
<dbReference type="HAMAP" id="MF_00107">
    <property type="entry name" value="IspF"/>
    <property type="match status" value="1"/>
</dbReference>
<dbReference type="InterPro" id="IPR001228">
    <property type="entry name" value="IspD"/>
</dbReference>
<dbReference type="InterPro" id="IPR026596">
    <property type="entry name" value="IspD/F"/>
</dbReference>
<dbReference type="InterPro" id="IPR034683">
    <property type="entry name" value="IspD/TarI"/>
</dbReference>
<dbReference type="InterPro" id="IPR050088">
    <property type="entry name" value="IspD/TarI_cytidylyltransf_bact"/>
</dbReference>
<dbReference type="InterPro" id="IPR018294">
    <property type="entry name" value="ISPD_synthase_CS"/>
</dbReference>
<dbReference type="InterPro" id="IPR003526">
    <property type="entry name" value="MECDP_synthase"/>
</dbReference>
<dbReference type="InterPro" id="IPR020555">
    <property type="entry name" value="MECDP_synthase_CS"/>
</dbReference>
<dbReference type="InterPro" id="IPR036571">
    <property type="entry name" value="MECDP_synthase_sf"/>
</dbReference>
<dbReference type="InterPro" id="IPR029044">
    <property type="entry name" value="Nucleotide-diphossugar_trans"/>
</dbReference>
<dbReference type="NCBIfam" id="TIGR00453">
    <property type="entry name" value="ispD"/>
    <property type="match status" value="1"/>
</dbReference>
<dbReference type="NCBIfam" id="TIGR00151">
    <property type="entry name" value="ispF"/>
    <property type="match status" value="1"/>
</dbReference>
<dbReference type="PANTHER" id="PTHR32125">
    <property type="entry name" value="2-C-METHYL-D-ERYTHRITOL 4-PHOSPHATE CYTIDYLYLTRANSFERASE, CHLOROPLASTIC"/>
    <property type="match status" value="1"/>
</dbReference>
<dbReference type="PANTHER" id="PTHR32125:SF4">
    <property type="entry name" value="2-C-METHYL-D-ERYTHRITOL 4-PHOSPHATE CYTIDYLYLTRANSFERASE, CHLOROPLASTIC"/>
    <property type="match status" value="1"/>
</dbReference>
<dbReference type="Pfam" id="PF01128">
    <property type="entry name" value="IspD"/>
    <property type="match status" value="1"/>
</dbReference>
<dbReference type="Pfam" id="PF02542">
    <property type="entry name" value="YgbB"/>
    <property type="match status" value="1"/>
</dbReference>
<dbReference type="SUPFAM" id="SSF69765">
    <property type="entry name" value="IpsF-like"/>
    <property type="match status" value="1"/>
</dbReference>
<dbReference type="SUPFAM" id="SSF53448">
    <property type="entry name" value="Nucleotide-diphospho-sugar transferases"/>
    <property type="match status" value="1"/>
</dbReference>
<dbReference type="PROSITE" id="PS01295">
    <property type="entry name" value="ISPD"/>
    <property type="match status" value="1"/>
</dbReference>
<dbReference type="PROSITE" id="PS01350">
    <property type="entry name" value="ISPF"/>
    <property type="match status" value="1"/>
</dbReference>
<organism>
    <name type="scientific">Solidesulfovibrio magneticus (strain ATCC 700980 / DSM 13731 / RS-1)</name>
    <name type="common">Desulfovibrio magneticus</name>
    <dbReference type="NCBI Taxonomy" id="573370"/>
    <lineage>
        <taxon>Bacteria</taxon>
        <taxon>Pseudomonadati</taxon>
        <taxon>Thermodesulfobacteriota</taxon>
        <taxon>Desulfovibrionia</taxon>
        <taxon>Desulfovibrionales</taxon>
        <taxon>Desulfovibrionaceae</taxon>
        <taxon>Solidesulfovibrio</taxon>
    </lineage>
</organism>
<accession>C4XSW4</accession>
<keyword id="KW-0414">Isoprene biosynthesis</keyword>
<keyword id="KW-0456">Lyase</keyword>
<keyword id="KW-0479">Metal-binding</keyword>
<keyword id="KW-0511">Multifunctional enzyme</keyword>
<keyword id="KW-0548">Nucleotidyltransferase</keyword>
<keyword id="KW-0808">Transferase</keyword>
<sequence length="400" mass="42047">MSLWTVLLAAGSGTRLAQASGGVKKQFLSVGGRPLYWKALTAFAKSPDVAGVVVVFAPEDLAEATRELAGFLDANHPGLPVLTAAGGARRQDSVKNGLDALPREARLVLIHDAARPFVDAGLIARVADALAAGRKAVIPTLPVTDTVKQVDGDRVTATLPRHELAAVQTPQGFDLTLLRQAYAHARPDFDVTDDASLVEHYGQPVFTVPGAPRNMKITHPEDLASLAEAAAPPVPVTGYGYDVHRYADPRNPGKQPPRPMKLGGFPILGAPEVLAHSDGDVLLHALTDAVLGCVAGGDIGRLFPDSNPDFDNMASGVFLSEALLAAKAKGLTITHVDLTIIAQIPKISPHAEAIRLNVAALLGLNKEQVNLKATTEEGLGFTGEKKGIKAVALVSGWRRP</sequence>
<proteinExistence type="inferred from homology"/>
<reference key="1">
    <citation type="journal article" date="2009" name="Genome Res.">
        <title>Whole genome sequence of Desulfovibrio magneticus strain RS-1 revealed common gene clusters in magnetotactic bacteria.</title>
        <authorList>
            <person name="Nakazawa H."/>
            <person name="Arakaki A."/>
            <person name="Narita-Yamada S."/>
            <person name="Yashiro I."/>
            <person name="Jinno K."/>
            <person name="Aoki N."/>
            <person name="Tsuruyama A."/>
            <person name="Okamura Y."/>
            <person name="Tanikawa S."/>
            <person name="Fujita N."/>
            <person name="Takeyama H."/>
            <person name="Matsunaga T."/>
        </authorList>
    </citation>
    <scope>NUCLEOTIDE SEQUENCE [LARGE SCALE GENOMIC DNA]</scope>
    <source>
        <strain>ATCC 700980 / DSM 13731 / RS-1</strain>
    </source>
</reference>
<evidence type="ECO:0000255" key="1">
    <source>
        <dbReference type="HAMAP-Rule" id="MF_01520"/>
    </source>
</evidence>
<gene>
    <name evidence="1" type="primary">ispDF</name>
    <name type="ordered locus">DMR_23150</name>
</gene>